<protein>
    <recommendedName>
        <fullName evidence="1">Phosphoheptose isomerase</fullName>
        <ecNumber evidence="1">5.3.1.28</ecNumber>
    </recommendedName>
    <alternativeName>
        <fullName evidence="1">Sedoheptulose 7-phosphate isomerase</fullName>
    </alternativeName>
</protein>
<sequence length="192" mass="20815">MYQDLIRNELNEAAETLANFLKDDANIHAIQRAAVLLADSFKAGGKVLSCGNGGSHCDAMHFAEELTGRYRENRPGYPAIAISDVSHISCVGNDFGFNDIFSRYVEAVGREGDVLLGISTSGNSANVIKAIAAAREKGMKVITLTGKDGGKMAGTADIEIRVPHFGYADRIQEIHIKVIHILIQLIEKEMVK</sequence>
<accession>B2U3R4</accession>
<comment type="function">
    <text evidence="1">Catalyzes the isomerization of sedoheptulose 7-phosphate in D-glycero-D-manno-heptose 7-phosphate.</text>
</comment>
<comment type="catalytic activity">
    <reaction evidence="1">
        <text>2 D-sedoheptulose 7-phosphate = D-glycero-alpha-D-manno-heptose 7-phosphate + D-glycero-beta-D-manno-heptose 7-phosphate</text>
        <dbReference type="Rhea" id="RHEA:27489"/>
        <dbReference type="ChEBI" id="CHEBI:57483"/>
        <dbReference type="ChEBI" id="CHEBI:60203"/>
        <dbReference type="ChEBI" id="CHEBI:60204"/>
        <dbReference type="EC" id="5.3.1.28"/>
    </reaction>
</comment>
<comment type="cofactor">
    <cofactor evidence="1">
        <name>Zn(2+)</name>
        <dbReference type="ChEBI" id="CHEBI:29105"/>
    </cofactor>
    <text evidence="1">Binds 1 zinc ion per subunit.</text>
</comment>
<comment type="pathway">
    <text evidence="1">Carbohydrate biosynthesis; D-glycero-D-manno-heptose 7-phosphate biosynthesis; D-glycero-alpha-D-manno-heptose 7-phosphate and D-glycero-beta-D-manno-heptose 7-phosphate from sedoheptulose 7-phosphate: step 1/1.</text>
</comment>
<comment type="subunit">
    <text evidence="1">Homotetramer.</text>
</comment>
<comment type="subcellular location">
    <subcellularLocation>
        <location evidence="1">Cytoplasm</location>
    </subcellularLocation>
</comment>
<comment type="miscellaneous">
    <text evidence="1">The reaction produces a racemic mixture of D-glycero-alpha-D-manno-heptose 7-phosphate and D-glycero-beta-D-manno-heptose 7-phosphate.</text>
</comment>
<comment type="similarity">
    <text evidence="1">Belongs to the SIS family. GmhA subfamily.</text>
</comment>
<feature type="chain" id="PRO_1000092294" description="Phosphoheptose isomerase">
    <location>
        <begin position="1"/>
        <end position="192"/>
    </location>
</feature>
<feature type="domain" description="SIS" evidence="1">
    <location>
        <begin position="37"/>
        <end position="192"/>
    </location>
</feature>
<feature type="binding site" evidence="1">
    <location>
        <begin position="52"/>
        <end position="54"/>
    </location>
    <ligand>
        <name>substrate</name>
    </ligand>
</feature>
<feature type="binding site" evidence="1">
    <location>
        <position position="61"/>
    </location>
    <ligand>
        <name>Zn(2+)</name>
        <dbReference type="ChEBI" id="CHEBI:29105"/>
    </ligand>
</feature>
<feature type="binding site" evidence="1">
    <location>
        <position position="65"/>
    </location>
    <ligand>
        <name>substrate</name>
    </ligand>
</feature>
<feature type="binding site" evidence="1">
    <location>
        <position position="65"/>
    </location>
    <ligand>
        <name>Zn(2+)</name>
        <dbReference type="ChEBI" id="CHEBI:29105"/>
    </ligand>
</feature>
<feature type="binding site" evidence="1">
    <location>
        <begin position="93"/>
        <end position="94"/>
    </location>
    <ligand>
        <name>substrate</name>
    </ligand>
</feature>
<feature type="binding site" evidence="1">
    <location>
        <begin position="119"/>
        <end position="121"/>
    </location>
    <ligand>
        <name>substrate</name>
    </ligand>
</feature>
<feature type="binding site" evidence="1">
    <location>
        <position position="124"/>
    </location>
    <ligand>
        <name>substrate</name>
    </ligand>
</feature>
<feature type="binding site" evidence="1">
    <location>
        <position position="172"/>
    </location>
    <ligand>
        <name>substrate</name>
    </ligand>
</feature>
<feature type="binding site" evidence="1">
    <location>
        <position position="172"/>
    </location>
    <ligand>
        <name>Zn(2+)</name>
        <dbReference type="ChEBI" id="CHEBI:29105"/>
    </ligand>
</feature>
<feature type="binding site" evidence="1">
    <location>
        <position position="180"/>
    </location>
    <ligand>
        <name>Zn(2+)</name>
        <dbReference type="ChEBI" id="CHEBI:29105"/>
    </ligand>
</feature>
<keyword id="KW-0119">Carbohydrate metabolism</keyword>
<keyword id="KW-0963">Cytoplasm</keyword>
<keyword id="KW-0413">Isomerase</keyword>
<keyword id="KW-0479">Metal-binding</keyword>
<keyword id="KW-1185">Reference proteome</keyword>
<keyword id="KW-0862">Zinc</keyword>
<proteinExistence type="inferred from homology"/>
<name>GMHA_SHIB3</name>
<organism>
    <name type="scientific">Shigella boydii serotype 18 (strain CDC 3083-94 / BS512)</name>
    <dbReference type="NCBI Taxonomy" id="344609"/>
    <lineage>
        <taxon>Bacteria</taxon>
        <taxon>Pseudomonadati</taxon>
        <taxon>Pseudomonadota</taxon>
        <taxon>Gammaproteobacteria</taxon>
        <taxon>Enterobacterales</taxon>
        <taxon>Enterobacteriaceae</taxon>
        <taxon>Shigella</taxon>
    </lineage>
</organism>
<dbReference type="EC" id="5.3.1.28" evidence="1"/>
<dbReference type="EMBL" id="CP001063">
    <property type="protein sequence ID" value="ACD06596.1"/>
    <property type="molecule type" value="Genomic_DNA"/>
</dbReference>
<dbReference type="SMR" id="B2U3R4"/>
<dbReference type="STRING" id="344609.SbBS512_E0218"/>
<dbReference type="KEGG" id="sbc:SbBS512_E0218"/>
<dbReference type="HOGENOM" id="CLU_080999_4_0_6"/>
<dbReference type="UniPathway" id="UPA00041">
    <property type="reaction ID" value="UER00436"/>
</dbReference>
<dbReference type="Proteomes" id="UP000001030">
    <property type="component" value="Chromosome"/>
</dbReference>
<dbReference type="GO" id="GO:0005737">
    <property type="term" value="C:cytoplasm"/>
    <property type="evidence" value="ECO:0007669"/>
    <property type="project" value="UniProtKB-SubCell"/>
</dbReference>
<dbReference type="GO" id="GO:0097367">
    <property type="term" value="F:carbohydrate derivative binding"/>
    <property type="evidence" value="ECO:0007669"/>
    <property type="project" value="InterPro"/>
</dbReference>
<dbReference type="GO" id="GO:0008968">
    <property type="term" value="F:D-sedoheptulose 7-phosphate isomerase activity"/>
    <property type="evidence" value="ECO:0007669"/>
    <property type="project" value="UniProtKB-UniRule"/>
</dbReference>
<dbReference type="GO" id="GO:0008270">
    <property type="term" value="F:zinc ion binding"/>
    <property type="evidence" value="ECO:0007669"/>
    <property type="project" value="UniProtKB-UniRule"/>
</dbReference>
<dbReference type="GO" id="GO:0005975">
    <property type="term" value="P:carbohydrate metabolic process"/>
    <property type="evidence" value="ECO:0007669"/>
    <property type="project" value="UniProtKB-UniRule"/>
</dbReference>
<dbReference type="GO" id="GO:2001061">
    <property type="term" value="P:D-glycero-D-manno-heptose 7-phosphate biosynthetic process"/>
    <property type="evidence" value="ECO:0007669"/>
    <property type="project" value="UniProtKB-UniPathway"/>
</dbReference>
<dbReference type="CDD" id="cd05006">
    <property type="entry name" value="SIS_GmhA"/>
    <property type="match status" value="1"/>
</dbReference>
<dbReference type="FunFam" id="3.40.50.10490:FF:000013">
    <property type="entry name" value="Phosphoheptose isomerase"/>
    <property type="match status" value="1"/>
</dbReference>
<dbReference type="Gene3D" id="3.40.50.10490">
    <property type="entry name" value="Glucose-6-phosphate isomerase like protein, domain 1"/>
    <property type="match status" value="1"/>
</dbReference>
<dbReference type="HAMAP" id="MF_00067">
    <property type="entry name" value="GmhA"/>
    <property type="match status" value="1"/>
</dbReference>
<dbReference type="InterPro" id="IPR035461">
    <property type="entry name" value="GmhA/DiaA"/>
</dbReference>
<dbReference type="InterPro" id="IPR004515">
    <property type="entry name" value="Phosphoheptose_Isoase"/>
</dbReference>
<dbReference type="InterPro" id="IPR001347">
    <property type="entry name" value="SIS_dom"/>
</dbReference>
<dbReference type="InterPro" id="IPR046348">
    <property type="entry name" value="SIS_dom_sf"/>
</dbReference>
<dbReference type="InterPro" id="IPR050099">
    <property type="entry name" value="SIS_GmhA/DiaA_subfam"/>
</dbReference>
<dbReference type="NCBIfam" id="TIGR00441">
    <property type="entry name" value="gmhA"/>
    <property type="match status" value="1"/>
</dbReference>
<dbReference type="NCBIfam" id="NF001628">
    <property type="entry name" value="PRK00414.1"/>
    <property type="match status" value="1"/>
</dbReference>
<dbReference type="PANTHER" id="PTHR30390:SF7">
    <property type="entry name" value="PHOSPHOHEPTOSE ISOMERASE"/>
    <property type="match status" value="1"/>
</dbReference>
<dbReference type="PANTHER" id="PTHR30390">
    <property type="entry name" value="SEDOHEPTULOSE 7-PHOSPHATE ISOMERASE / DNAA INITIATOR-ASSOCIATING FACTOR FOR REPLICATION INITIATION"/>
    <property type="match status" value="1"/>
</dbReference>
<dbReference type="Pfam" id="PF13580">
    <property type="entry name" value="SIS_2"/>
    <property type="match status" value="1"/>
</dbReference>
<dbReference type="SUPFAM" id="SSF53697">
    <property type="entry name" value="SIS domain"/>
    <property type="match status" value="1"/>
</dbReference>
<dbReference type="PROSITE" id="PS51464">
    <property type="entry name" value="SIS"/>
    <property type="match status" value="1"/>
</dbReference>
<evidence type="ECO:0000255" key="1">
    <source>
        <dbReference type="HAMAP-Rule" id="MF_00067"/>
    </source>
</evidence>
<reference key="1">
    <citation type="submission" date="2008-05" db="EMBL/GenBank/DDBJ databases">
        <title>Complete sequence of Shigella boydii serotype 18 strain BS512.</title>
        <authorList>
            <person name="Rasko D.A."/>
            <person name="Rosovitz M."/>
            <person name="Maurelli A.T."/>
            <person name="Myers G."/>
            <person name="Seshadri R."/>
            <person name="Cer R."/>
            <person name="Jiang L."/>
            <person name="Ravel J."/>
            <person name="Sebastian Y."/>
        </authorList>
    </citation>
    <scope>NUCLEOTIDE SEQUENCE [LARGE SCALE GENOMIC DNA]</scope>
    <source>
        <strain>CDC 3083-94 / BS512</strain>
    </source>
</reference>
<gene>
    <name evidence="1" type="primary">gmhA</name>
    <name type="ordered locus">SbBS512_E0218</name>
</gene>